<name>FMNRE_PSEAE</name>
<proteinExistence type="evidence at protein level"/>
<reference key="1">
    <citation type="journal article" date="2000" name="Nature">
        <title>Complete genome sequence of Pseudomonas aeruginosa PAO1, an opportunistic pathogen.</title>
        <authorList>
            <person name="Stover C.K."/>
            <person name="Pham X.-Q.T."/>
            <person name="Erwin A.L."/>
            <person name="Mizoguchi S.D."/>
            <person name="Warrener P."/>
            <person name="Hickey M.J."/>
            <person name="Brinkman F.S.L."/>
            <person name="Hufnagle W.O."/>
            <person name="Kowalik D.J."/>
            <person name="Lagrou M."/>
            <person name="Garber R.L."/>
            <person name="Goltry L."/>
            <person name="Tolentino E."/>
            <person name="Westbrock-Wadman S."/>
            <person name="Yuan Y."/>
            <person name="Brody L.L."/>
            <person name="Coulter S.N."/>
            <person name="Folger K.R."/>
            <person name="Kas A."/>
            <person name="Larbig K."/>
            <person name="Lim R.M."/>
            <person name="Smith K.A."/>
            <person name="Spencer D.H."/>
            <person name="Wong G.K.-S."/>
            <person name="Wu Z."/>
            <person name="Paulsen I.T."/>
            <person name="Reizer J."/>
            <person name="Saier M.H. Jr."/>
            <person name="Hancock R.E.W."/>
            <person name="Lory S."/>
            <person name="Olson M.V."/>
        </authorList>
    </citation>
    <scope>NUCLEOTIDE SEQUENCE [LARGE SCALE GENOMIC DNA]</scope>
    <source>
        <strain>ATCC 15692 / DSM 22644 / CIP 104116 / JCM 14847 / LMG 12228 / 1C / PRS 101 / PAO1</strain>
    </source>
</reference>
<reference evidence="6 7" key="2">
    <citation type="journal article" date="2006" name="Acta Crystallogr. D">
        <title>Structure determination of an FMN reductase from Pseudomonas aeruginosa PA01 using sulfur anomalous signal.</title>
        <authorList>
            <person name="Agarwal R."/>
            <person name="Bonanno J.B."/>
            <person name="Burley S.K."/>
            <person name="Swaminathan S."/>
        </authorList>
    </citation>
    <scope>X-RAY CRYSTALLOGRAPHY (1.28 ANGSTROMS) OF 2-181 OF APO FORM AND HOLO FORM IN COMPLEX WITH FMN</scope>
    <scope>FUNCTION</scope>
    <scope>CATALYTIC ACTIVITY</scope>
    <scope>COFACTOR</scope>
    <scope>SUBUNIT</scope>
    <source>
        <strain>ATCC 15692 / DSM 22644 / CIP 104116 / JCM 14847 / LMG 12228 / 1C / PRS 101 / PAO1</strain>
    </source>
</reference>
<comment type="function">
    <text evidence="1">Has NAD(P)H-dependent FMN reductase activity.</text>
</comment>
<comment type="cofactor">
    <cofactor evidence="1">
        <name>FMN</name>
        <dbReference type="ChEBI" id="CHEBI:58210"/>
    </cofactor>
</comment>
<comment type="subunit">
    <text evidence="1">Homodimer.</text>
</comment>
<comment type="similarity">
    <text evidence="3">Belongs to the SsuE family.</text>
</comment>
<feature type="chain" id="PRO_0000431994" description="NAD(P)H-dependent FMN reductase PA1204">
    <location>
        <begin position="1"/>
        <end position="185"/>
    </location>
</feature>
<feature type="binding site" evidence="1">
    <location>
        <begin position="13"/>
        <end position="20"/>
    </location>
    <ligand>
        <name>FMN</name>
        <dbReference type="ChEBI" id="CHEBI:58210"/>
    </ligand>
</feature>
<feature type="binding site" evidence="1">
    <location>
        <begin position="81"/>
        <end position="83"/>
    </location>
    <ligand>
        <name>FMN</name>
        <dbReference type="ChEBI" id="CHEBI:58210"/>
    </ligand>
</feature>
<feature type="binding site" evidence="4">
    <location>
        <begin position="115"/>
        <end position="122"/>
    </location>
    <ligand>
        <name>NAD(+)</name>
        <dbReference type="ChEBI" id="CHEBI:57540"/>
    </ligand>
</feature>
<feature type="strand" evidence="8">
    <location>
        <begin position="6"/>
        <end position="12"/>
    </location>
</feature>
<feature type="helix" evidence="8">
    <location>
        <begin position="19"/>
        <end position="28"/>
    </location>
</feature>
<feature type="strand" evidence="8">
    <location>
        <begin position="36"/>
        <end position="39"/>
    </location>
</feature>
<feature type="helix" evidence="8">
    <location>
        <begin position="50"/>
        <end position="53"/>
    </location>
</feature>
<feature type="helix" evidence="8">
    <location>
        <begin position="59"/>
        <end position="70"/>
    </location>
</feature>
<feature type="strand" evidence="8">
    <location>
        <begin position="72"/>
        <end position="77"/>
    </location>
</feature>
<feature type="helix" evidence="8">
    <location>
        <begin position="87"/>
        <end position="96"/>
    </location>
</feature>
<feature type="strand" evidence="8">
    <location>
        <begin position="99"/>
        <end position="101"/>
    </location>
</feature>
<feature type="turn" evidence="8">
    <location>
        <begin position="103"/>
        <end position="106"/>
    </location>
</feature>
<feature type="strand" evidence="8">
    <location>
        <begin position="108"/>
        <end position="114"/>
    </location>
</feature>
<feature type="turn" evidence="8">
    <location>
        <begin position="118"/>
        <end position="121"/>
    </location>
</feature>
<feature type="helix" evidence="8">
    <location>
        <begin position="122"/>
        <end position="135"/>
    </location>
</feature>
<feature type="strand" evidence="8">
    <location>
        <begin position="145"/>
        <end position="147"/>
    </location>
</feature>
<feature type="helix" evidence="8">
    <location>
        <begin position="150"/>
        <end position="152"/>
    </location>
</feature>
<feature type="strand" evidence="9">
    <location>
        <begin position="158"/>
        <end position="160"/>
    </location>
</feature>
<feature type="helix" evidence="8">
    <location>
        <begin position="163"/>
        <end position="177"/>
    </location>
</feature>
<evidence type="ECO:0000269" key="1">
    <source>
    </source>
</evidence>
<evidence type="ECO:0000303" key="2">
    <source>
    </source>
</evidence>
<evidence type="ECO:0000305" key="3"/>
<evidence type="ECO:0000305" key="4">
    <source>
    </source>
</evidence>
<evidence type="ECO:0000312" key="5">
    <source>
        <dbReference type="EMBL" id="AAG04593.1"/>
    </source>
</evidence>
<evidence type="ECO:0007744" key="6">
    <source>
        <dbReference type="PDB" id="1RTT"/>
    </source>
</evidence>
<evidence type="ECO:0007744" key="7">
    <source>
        <dbReference type="PDB" id="1X77"/>
    </source>
</evidence>
<evidence type="ECO:0007829" key="8">
    <source>
        <dbReference type="PDB" id="1RTT"/>
    </source>
</evidence>
<evidence type="ECO:0007829" key="9">
    <source>
        <dbReference type="PDB" id="1X77"/>
    </source>
</evidence>
<protein>
    <recommendedName>
        <fullName evidence="2">NAD(P)H-dependent FMN reductase PA1204</fullName>
        <ecNumber evidence="1">1.-.-.-</ecNumber>
    </recommendedName>
</protein>
<keyword id="KW-0002">3D-structure</keyword>
<keyword id="KW-0285">Flavoprotein</keyword>
<keyword id="KW-0288">FMN</keyword>
<keyword id="KW-0520">NAD</keyword>
<keyword id="KW-0521">NADP</keyword>
<keyword id="KW-0547">Nucleotide-binding</keyword>
<keyword id="KW-0560">Oxidoreductase</keyword>
<keyword id="KW-1185">Reference proteome</keyword>
<sequence length="185" mass="20224">MSDDIKVLGISGSLRSGSYNSAALQEAIGLVPPGMSIELADISGIPLYNEDVYALGFPPAVERFREQIRAADALLFATPEYNYSMAGVLKNAIDWASRPPEQPFSGKPAAILGASAGRFGTARAQYHLRQTLVFLDVHPLNKPEVMISSAQNAFDAQGRLLDDKARELIQQQLQALQLWVRRLRG</sequence>
<dbReference type="EC" id="1.-.-.-" evidence="1"/>
<dbReference type="EMBL" id="AE004091">
    <property type="protein sequence ID" value="AAG04593.1"/>
    <property type="molecule type" value="Genomic_DNA"/>
</dbReference>
<dbReference type="PIR" id="H83495">
    <property type="entry name" value="H83495"/>
</dbReference>
<dbReference type="RefSeq" id="NP_249895.1">
    <property type="nucleotide sequence ID" value="NC_002516.2"/>
</dbReference>
<dbReference type="RefSeq" id="WP_003082483.1">
    <property type="nucleotide sequence ID" value="NZ_QZGE01000006.1"/>
</dbReference>
<dbReference type="PDB" id="1RTT">
    <property type="method" value="X-ray"/>
    <property type="resolution" value="1.28 A"/>
    <property type="chains" value="A=2-181"/>
</dbReference>
<dbReference type="PDB" id="1X77">
    <property type="method" value="X-ray"/>
    <property type="resolution" value="2.70 A"/>
    <property type="chains" value="A/B=2-181"/>
</dbReference>
<dbReference type="PDBsum" id="1RTT"/>
<dbReference type="PDBsum" id="1X77"/>
<dbReference type="SMR" id="Q9I4D4"/>
<dbReference type="FunCoup" id="Q9I4D4">
    <property type="interactions" value="402"/>
</dbReference>
<dbReference type="STRING" id="208964.PA1204"/>
<dbReference type="PaxDb" id="208964-PA1204"/>
<dbReference type="DNASU" id="882133"/>
<dbReference type="GeneID" id="882133"/>
<dbReference type="KEGG" id="pae:PA1204"/>
<dbReference type="PATRIC" id="fig|208964.12.peg.1250"/>
<dbReference type="PseudoCAP" id="PA1204"/>
<dbReference type="HOGENOM" id="CLU_055322_4_2_6"/>
<dbReference type="InParanoid" id="Q9I4D4"/>
<dbReference type="OrthoDB" id="9812295at2"/>
<dbReference type="PhylomeDB" id="Q9I4D4"/>
<dbReference type="BioCyc" id="PAER208964:G1FZ6-1229-MONOMER"/>
<dbReference type="EvolutionaryTrace" id="Q9I4D4"/>
<dbReference type="Proteomes" id="UP000002438">
    <property type="component" value="Chromosome"/>
</dbReference>
<dbReference type="GO" id="GO:0005829">
    <property type="term" value="C:cytosol"/>
    <property type="evidence" value="ECO:0000318"/>
    <property type="project" value="GO_Central"/>
</dbReference>
<dbReference type="GO" id="GO:0010181">
    <property type="term" value="F:FMN binding"/>
    <property type="evidence" value="ECO:0000314"/>
    <property type="project" value="UniProtKB"/>
</dbReference>
<dbReference type="GO" id="GO:0052873">
    <property type="term" value="F:FMN reductase (NADPH) activity"/>
    <property type="evidence" value="ECO:0000314"/>
    <property type="project" value="UniProtKB"/>
</dbReference>
<dbReference type="GO" id="GO:0042802">
    <property type="term" value="F:identical protein binding"/>
    <property type="evidence" value="ECO:0000314"/>
    <property type="project" value="UniProtKB"/>
</dbReference>
<dbReference type="GO" id="GO:0003955">
    <property type="term" value="F:NAD(P)H dehydrogenase (quinone) activity"/>
    <property type="evidence" value="ECO:0000315"/>
    <property type="project" value="PseudoCAP"/>
</dbReference>
<dbReference type="GO" id="GO:0016655">
    <property type="term" value="F:oxidoreductase activity, acting on NAD(P)H, quinone or similar compound as acceptor"/>
    <property type="evidence" value="ECO:0000314"/>
    <property type="project" value="PseudoCAP"/>
</dbReference>
<dbReference type="GO" id="GO:0042803">
    <property type="term" value="F:protein homodimerization activity"/>
    <property type="evidence" value="ECO:0000314"/>
    <property type="project" value="UniProtKB"/>
</dbReference>
<dbReference type="Gene3D" id="3.40.50.360">
    <property type="match status" value="1"/>
</dbReference>
<dbReference type="InterPro" id="IPR029039">
    <property type="entry name" value="Flavoprotein-like_sf"/>
</dbReference>
<dbReference type="InterPro" id="IPR005025">
    <property type="entry name" value="FMN_Rdtase-like_dom"/>
</dbReference>
<dbReference type="InterPro" id="IPR050712">
    <property type="entry name" value="NAD(P)H-dep_reductase"/>
</dbReference>
<dbReference type="PANTHER" id="PTHR30543">
    <property type="entry name" value="CHROMATE REDUCTASE"/>
    <property type="match status" value="1"/>
</dbReference>
<dbReference type="PANTHER" id="PTHR30543:SF21">
    <property type="entry name" value="NAD(P)H-DEPENDENT FMN REDUCTASE LOT6"/>
    <property type="match status" value="1"/>
</dbReference>
<dbReference type="Pfam" id="PF03358">
    <property type="entry name" value="FMN_red"/>
    <property type="match status" value="1"/>
</dbReference>
<dbReference type="SUPFAM" id="SSF52218">
    <property type="entry name" value="Flavoproteins"/>
    <property type="match status" value="1"/>
</dbReference>
<organism evidence="5">
    <name type="scientific">Pseudomonas aeruginosa (strain ATCC 15692 / DSM 22644 / CIP 104116 / JCM 14847 / LMG 12228 / 1C / PRS 101 / PAO1)</name>
    <dbReference type="NCBI Taxonomy" id="208964"/>
    <lineage>
        <taxon>Bacteria</taxon>
        <taxon>Pseudomonadati</taxon>
        <taxon>Pseudomonadota</taxon>
        <taxon>Gammaproteobacteria</taxon>
        <taxon>Pseudomonadales</taxon>
        <taxon>Pseudomonadaceae</taxon>
        <taxon>Pseudomonas</taxon>
    </lineage>
</organism>
<accession>Q9I4D4</accession>
<gene>
    <name evidence="5" type="ordered locus">PA1204</name>
</gene>